<protein>
    <recommendedName>
        <fullName>Cytosol aminopeptidase</fullName>
        <ecNumber>3.4.11.1</ecNumber>
    </recommendedName>
    <alternativeName>
        <fullName>Leucine aminopeptidase</fullName>
        <shortName>LAP</shortName>
        <ecNumber>3.4.11.10</ecNumber>
    </alternativeName>
    <alternativeName>
        <fullName>Leucyl aminopeptidase</fullName>
    </alternativeName>
</protein>
<comment type="function">
    <text evidence="1">Presumably involved in the processing and regular turnover of intracellular proteins. Catalyzes the removal of unsubstituted N-terminal amino acids from various peptides (By similarity).</text>
</comment>
<comment type="catalytic activity">
    <reaction>
        <text>Release of an N-terminal amino acid, Xaa-|-Yaa-, in which Xaa is preferably Leu, but may be other amino acids including Pro although not Arg or Lys, and Yaa may be Pro. Amino acid amides and methyl esters are also readily hydrolyzed, but rates on arylamides are exceedingly low.</text>
        <dbReference type="EC" id="3.4.11.1"/>
    </reaction>
</comment>
<comment type="catalytic activity">
    <reaction>
        <text>Release of an N-terminal amino acid, preferentially leucine, but not glutamic or aspartic acids.</text>
        <dbReference type="EC" id="3.4.11.10"/>
    </reaction>
</comment>
<comment type="cofactor">
    <cofactor evidence="1">
        <name>Mn(2+)</name>
        <dbReference type="ChEBI" id="CHEBI:29035"/>
    </cofactor>
    <text evidence="1">Binds 2 manganese ions per subunit.</text>
</comment>
<comment type="subcellular location">
    <subcellularLocation>
        <location evidence="1">Cytoplasm</location>
    </subcellularLocation>
</comment>
<comment type="similarity">
    <text evidence="3">Belongs to the peptidase M17 family.</text>
</comment>
<keyword id="KW-0031">Aminopeptidase</keyword>
<keyword id="KW-0963">Cytoplasm</keyword>
<keyword id="KW-0378">Hydrolase</keyword>
<keyword id="KW-0464">Manganese</keyword>
<keyword id="KW-0479">Metal-binding</keyword>
<keyword id="KW-0645">Protease</keyword>
<keyword id="KW-1185">Reference proteome</keyword>
<evidence type="ECO:0000250" key="1"/>
<evidence type="ECO:0000255" key="2"/>
<evidence type="ECO:0000305" key="3"/>
<proteinExistence type="inferred from homology"/>
<sequence>MEFLVKSVRPETLKTATLVLAVGEGRKLGASAKAVDDATGGAISAVLKRGDLAGKVGQTLLLQSLPNLKAERVLLVGAGKERELGDRQYRKLASAVLSTLKGLAGADAALALGDLAVKGRDAHAKARLLVETLADGLYVFDRYKSQKAEPLKLKKLTLLADKADSAAVEQGSKEAQAIANGMALTRDLGNLPPNVCHPTFLGEQAKGLAKEFKGLKVEVLDEKKLRELGMGSFLAVAQGSDQPPRLIVLQYNGAKKDQAPHVLVGKGITFDTGGISLKPGLGMDEMKFDMCGAASVFGTFRAVLELQLPINLVGLLACAENMPSGGATRPGDIVTTMSGQTVEILNTDAEGRLVLCDALTYAERFKPQSVIDIATLTGACIVALGSNTSGLMGNNEALVRQLLKAGEFADDRAWQLPLFDEYQEQLDSPFADIANIGGPKAGTITAGCFLSRFAKKYHWAHLDIAGTAWISGGKDKGATGRPVPLLTQYLLERAK</sequence>
<feature type="chain" id="PRO_0000165782" description="Cytosol aminopeptidase">
    <location>
        <begin position="1"/>
        <end position="495"/>
    </location>
</feature>
<feature type="active site" evidence="2">
    <location>
        <position position="278"/>
    </location>
</feature>
<feature type="active site" evidence="2">
    <location>
        <position position="352"/>
    </location>
</feature>
<feature type="binding site" evidence="1">
    <location>
        <position position="266"/>
    </location>
    <ligand>
        <name>Mn(2+)</name>
        <dbReference type="ChEBI" id="CHEBI:29035"/>
        <label>2</label>
    </ligand>
</feature>
<feature type="binding site" evidence="1">
    <location>
        <position position="271"/>
    </location>
    <ligand>
        <name>Mn(2+)</name>
        <dbReference type="ChEBI" id="CHEBI:29035"/>
        <label>1</label>
    </ligand>
</feature>
<feature type="binding site" evidence="1">
    <location>
        <position position="271"/>
    </location>
    <ligand>
        <name>Mn(2+)</name>
        <dbReference type="ChEBI" id="CHEBI:29035"/>
        <label>2</label>
    </ligand>
</feature>
<feature type="binding site" evidence="1">
    <location>
        <position position="289"/>
    </location>
    <ligand>
        <name>Mn(2+)</name>
        <dbReference type="ChEBI" id="CHEBI:29035"/>
        <label>2</label>
    </ligand>
</feature>
<feature type="binding site" evidence="1">
    <location>
        <position position="348"/>
    </location>
    <ligand>
        <name>Mn(2+)</name>
        <dbReference type="ChEBI" id="CHEBI:29035"/>
        <label>1</label>
    </ligand>
</feature>
<feature type="binding site" evidence="1">
    <location>
        <position position="350"/>
    </location>
    <ligand>
        <name>Mn(2+)</name>
        <dbReference type="ChEBI" id="CHEBI:29035"/>
        <label>1</label>
    </ligand>
</feature>
<feature type="binding site" evidence="1">
    <location>
        <position position="350"/>
    </location>
    <ligand>
        <name>Mn(2+)</name>
        <dbReference type="ChEBI" id="CHEBI:29035"/>
        <label>2</label>
    </ligand>
</feature>
<organism>
    <name type="scientific">Pseudomonas aeruginosa (strain ATCC 15692 / DSM 22644 / CIP 104116 / JCM 14847 / LMG 12228 / 1C / PRS 101 / PAO1)</name>
    <dbReference type="NCBI Taxonomy" id="208964"/>
    <lineage>
        <taxon>Bacteria</taxon>
        <taxon>Pseudomonadati</taxon>
        <taxon>Pseudomonadota</taxon>
        <taxon>Gammaproteobacteria</taxon>
        <taxon>Pseudomonadales</taxon>
        <taxon>Pseudomonadaceae</taxon>
        <taxon>Pseudomonas</taxon>
    </lineage>
</organism>
<gene>
    <name type="primary">pepA</name>
    <name type="synonym">phpA</name>
    <name type="ordered locus">PA3831</name>
</gene>
<accession>O68822</accession>
<reference key="1">
    <citation type="journal article" date="1999" name="J. Bacteriol.">
        <title>Identification of an Escherichia coli pepA homolog and its involvement in suppression of the algB phenotype in mucoid Pseudomonas aeruginosa.</title>
        <authorList>
            <person name="Woolwine S.C."/>
            <person name="Wozniak D.J."/>
        </authorList>
    </citation>
    <scope>NUCLEOTIDE SEQUENCE [GENOMIC DNA]</scope>
    <source>
        <strain>FRD1</strain>
    </source>
</reference>
<reference key="2">
    <citation type="journal article" date="2000" name="Nature">
        <title>Complete genome sequence of Pseudomonas aeruginosa PAO1, an opportunistic pathogen.</title>
        <authorList>
            <person name="Stover C.K."/>
            <person name="Pham X.-Q.T."/>
            <person name="Erwin A.L."/>
            <person name="Mizoguchi S.D."/>
            <person name="Warrener P."/>
            <person name="Hickey M.J."/>
            <person name="Brinkman F.S.L."/>
            <person name="Hufnagle W.O."/>
            <person name="Kowalik D.J."/>
            <person name="Lagrou M."/>
            <person name="Garber R.L."/>
            <person name="Goltry L."/>
            <person name="Tolentino E."/>
            <person name="Westbrock-Wadman S."/>
            <person name="Yuan Y."/>
            <person name="Brody L.L."/>
            <person name="Coulter S.N."/>
            <person name="Folger K.R."/>
            <person name="Kas A."/>
            <person name="Larbig K."/>
            <person name="Lim R.M."/>
            <person name="Smith K.A."/>
            <person name="Spencer D.H."/>
            <person name="Wong G.K.-S."/>
            <person name="Wu Z."/>
            <person name="Paulsen I.T."/>
            <person name="Reizer J."/>
            <person name="Saier M.H. Jr."/>
            <person name="Hancock R.E.W."/>
            <person name="Lory S."/>
            <person name="Olson M.V."/>
        </authorList>
    </citation>
    <scope>NUCLEOTIDE SEQUENCE [LARGE SCALE GENOMIC DNA]</scope>
    <source>
        <strain>ATCC 15692 / DSM 22644 / CIP 104116 / JCM 14847 / LMG 12228 / 1C / PRS 101 / PAO1</strain>
    </source>
</reference>
<dbReference type="EC" id="3.4.11.1"/>
<dbReference type="EC" id="3.4.11.10"/>
<dbReference type="EMBL" id="AF054622">
    <property type="protein sequence ID" value="AAD04821.1"/>
    <property type="molecule type" value="Genomic_DNA"/>
</dbReference>
<dbReference type="EMBL" id="AE004091">
    <property type="protein sequence ID" value="AAG07218.1"/>
    <property type="molecule type" value="Genomic_DNA"/>
</dbReference>
<dbReference type="PIR" id="D83167">
    <property type="entry name" value="D83167"/>
</dbReference>
<dbReference type="RefSeq" id="NP_252520.1">
    <property type="nucleotide sequence ID" value="NC_002516.2"/>
</dbReference>
<dbReference type="RefSeq" id="WP_003092867.1">
    <property type="nucleotide sequence ID" value="NZ_QZGE01000001.1"/>
</dbReference>
<dbReference type="SMR" id="O68822"/>
<dbReference type="FunCoup" id="O68822">
    <property type="interactions" value="556"/>
</dbReference>
<dbReference type="STRING" id="208964.PA3831"/>
<dbReference type="MEROPS" id="M17.003"/>
<dbReference type="PaxDb" id="208964-PA3831"/>
<dbReference type="GeneID" id="879865"/>
<dbReference type="KEGG" id="pae:PA3831"/>
<dbReference type="PATRIC" id="fig|208964.12.peg.4011"/>
<dbReference type="PseudoCAP" id="PA3831"/>
<dbReference type="HOGENOM" id="CLU_013734_2_2_6"/>
<dbReference type="InParanoid" id="O68822"/>
<dbReference type="OrthoDB" id="9809354at2"/>
<dbReference type="PhylomeDB" id="O68822"/>
<dbReference type="BioCyc" id="PAER208964:G1FZ6-3903-MONOMER"/>
<dbReference type="Proteomes" id="UP000002438">
    <property type="component" value="Chromosome"/>
</dbReference>
<dbReference type="GO" id="GO:0005737">
    <property type="term" value="C:cytoplasm"/>
    <property type="evidence" value="ECO:0000318"/>
    <property type="project" value="GO_Central"/>
</dbReference>
<dbReference type="GO" id="GO:0004177">
    <property type="term" value="F:aminopeptidase activity"/>
    <property type="evidence" value="ECO:0000318"/>
    <property type="project" value="GO_Central"/>
</dbReference>
<dbReference type="GO" id="GO:0030145">
    <property type="term" value="F:manganese ion binding"/>
    <property type="evidence" value="ECO:0007669"/>
    <property type="project" value="UniProtKB-UniRule"/>
</dbReference>
<dbReference type="GO" id="GO:0070006">
    <property type="term" value="F:metalloaminopeptidase activity"/>
    <property type="evidence" value="ECO:0007669"/>
    <property type="project" value="InterPro"/>
</dbReference>
<dbReference type="GO" id="GO:0006508">
    <property type="term" value="P:proteolysis"/>
    <property type="evidence" value="ECO:0000318"/>
    <property type="project" value="GO_Central"/>
</dbReference>
<dbReference type="GO" id="GO:0016070">
    <property type="term" value="P:RNA metabolic process"/>
    <property type="evidence" value="ECO:0000315"/>
    <property type="project" value="PseudoCAP"/>
</dbReference>
<dbReference type="CDD" id="cd00433">
    <property type="entry name" value="Peptidase_M17"/>
    <property type="match status" value="1"/>
</dbReference>
<dbReference type="FunFam" id="3.40.630.10:FF:000004">
    <property type="entry name" value="Probable cytosol aminopeptidase"/>
    <property type="match status" value="1"/>
</dbReference>
<dbReference type="Gene3D" id="3.40.220.10">
    <property type="entry name" value="Leucine Aminopeptidase, subunit E, domain 1"/>
    <property type="match status" value="1"/>
</dbReference>
<dbReference type="Gene3D" id="3.40.630.10">
    <property type="entry name" value="Zn peptidases"/>
    <property type="match status" value="1"/>
</dbReference>
<dbReference type="HAMAP" id="MF_00181">
    <property type="entry name" value="Cytosol_peptidase_M17"/>
    <property type="match status" value="1"/>
</dbReference>
<dbReference type="InterPro" id="IPR011356">
    <property type="entry name" value="Leucine_aapep/pepB"/>
</dbReference>
<dbReference type="InterPro" id="IPR043472">
    <property type="entry name" value="Macro_dom-like"/>
</dbReference>
<dbReference type="InterPro" id="IPR000819">
    <property type="entry name" value="Peptidase_M17_C"/>
</dbReference>
<dbReference type="InterPro" id="IPR023042">
    <property type="entry name" value="Peptidase_M17_leu_NH2_pept"/>
</dbReference>
<dbReference type="InterPro" id="IPR008283">
    <property type="entry name" value="Peptidase_M17_N"/>
</dbReference>
<dbReference type="NCBIfam" id="NF002073">
    <property type="entry name" value="PRK00913.1-2"/>
    <property type="match status" value="1"/>
</dbReference>
<dbReference type="NCBIfam" id="NF002074">
    <property type="entry name" value="PRK00913.1-4"/>
    <property type="match status" value="1"/>
</dbReference>
<dbReference type="NCBIfam" id="NF002077">
    <property type="entry name" value="PRK00913.2-4"/>
    <property type="match status" value="1"/>
</dbReference>
<dbReference type="PANTHER" id="PTHR11963:SF23">
    <property type="entry name" value="CYTOSOL AMINOPEPTIDASE"/>
    <property type="match status" value="1"/>
</dbReference>
<dbReference type="PANTHER" id="PTHR11963">
    <property type="entry name" value="LEUCINE AMINOPEPTIDASE-RELATED"/>
    <property type="match status" value="1"/>
</dbReference>
<dbReference type="Pfam" id="PF00883">
    <property type="entry name" value="Peptidase_M17"/>
    <property type="match status" value="1"/>
</dbReference>
<dbReference type="Pfam" id="PF02789">
    <property type="entry name" value="Peptidase_M17_N"/>
    <property type="match status" value="1"/>
</dbReference>
<dbReference type="PRINTS" id="PR00481">
    <property type="entry name" value="LAMNOPPTDASE"/>
</dbReference>
<dbReference type="SUPFAM" id="SSF52949">
    <property type="entry name" value="Macro domain-like"/>
    <property type="match status" value="1"/>
</dbReference>
<dbReference type="SUPFAM" id="SSF53187">
    <property type="entry name" value="Zn-dependent exopeptidases"/>
    <property type="match status" value="1"/>
</dbReference>
<dbReference type="PROSITE" id="PS00631">
    <property type="entry name" value="CYTOSOL_AP"/>
    <property type="match status" value="1"/>
</dbReference>
<name>AMPA_PSEAE</name>